<feature type="chain" id="PRO_0000210271" description="Syntaxin PEP12">
    <location>
        <begin position="1"/>
        <end position="288"/>
    </location>
</feature>
<feature type="topological domain" description="Cytoplasmic" evidence="1">
    <location>
        <begin position="1"/>
        <end position="268"/>
    </location>
</feature>
<feature type="transmembrane region" description="Helical; Anchor for type IV membrane protein" evidence="1">
    <location>
        <begin position="269"/>
        <end position="288"/>
    </location>
</feature>
<feature type="domain" description="t-SNARE coiled-coil homology" evidence="2">
    <location>
        <begin position="195"/>
        <end position="257"/>
    </location>
</feature>
<feature type="modified residue" description="Phosphoserine" evidence="5 6">
    <location>
        <position position="2"/>
    </location>
</feature>
<feature type="modified residue" description="Phosphoserine" evidence="6">
    <location>
        <position position="23"/>
    </location>
</feature>
<feature type="mutagenesis site" description="Increases ubiquitination by TUL1." evidence="3">
    <original>L</original>
    <variation>D</variation>
    <location>
        <position position="271"/>
    </location>
</feature>
<feature type="sequence conflict" description="In Ref. 1; AAB38370." evidence="4" ref="1">
    <original>A</original>
    <variation>G</variation>
    <location>
        <position position="13"/>
    </location>
</feature>
<feature type="sequence conflict" description="In Ref. 1; AAB38370." evidence="4" ref="1">
    <original>V</original>
    <variation>I</variation>
    <location>
        <position position="89"/>
    </location>
</feature>
<name>PEP12_YEAST</name>
<gene>
    <name type="primary">PEP12</name>
    <name type="synonym">VPS6</name>
    <name type="synonym">VPT13</name>
    <name type="ordered locus">YOR036W</name>
    <name type="ORF">OR26.29</name>
</gene>
<proteinExistence type="evidence at protein level"/>
<organism>
    <name type="scientific">Saccharomyces cerevisiae (strain ATCC 204508 / S288c)</name>
    <name type="common">Baker's yeast</name>
    <dbReference type="NCBI Taxonomy" id="559292"/>
    <lineage>
        <taxon>Eukaryota</taxon>
        <taxon>Fungi</taxon>
        <taxon>Dikarya</taxon>
        <taxon>Ascomycota</taxon>
        <taxon>Saccharomycotina</taxon>
        <taxon>Saccharomycetes</taxon>
        <taxon>Saccharomycetales</taxon>
        <taxon>Saccharomycetaceae</taxon>
        <taxon>Saccharomyces</taxon>
    </lineage>
</organism>
<sequence>MSEDEFFGGDNEAVWNGSRFSDSPEFQTLKEEVAAELFEINGQISTLQQFTATLKSFIDRGDVSAKVVERINKRSVAKIEEIGGLIKKVNTSVKKMDAIEEASLDKTQIIAREKLVRDVSYSFQEFQGIQRQFTQVMKQVNERAKESLEASEMANDAALLDEEQRQNSSKSTRIPGSQIVIERDPINNEEFAYQQNLIEQRDQEISNIERGITELNEVFKDLGSVVQQQGVLVDNIEANIYTTSDNTQLASDELRKAMRYQKRTSRWRVYLLIVLLVMLLFIFLIMKL</sequence>
<reference key="1">
    <citation type="journal article" date="1996" name="Mol. Biol. Cell">
        <title>Novel syntaxin homologue, Pep12p, required for the sorting of lumenal hydrolases to the lysosome-like vacuole in yeast.</title>
        <authorList>
            <person name="Becherer K.A."/>
            <person name="Rieder S.E."/>
            <person name="Emr S.D."/>
            <person name="Jones E.W."/>
        </authorList>
    </citation>
    <scope>NUCLEOTIDE SEQUENCE [GENOMIC DNA]</scope>
</reference>
<reference key="2">
    <citation type="journal article" date="1997" name="Nature">
        <title>The nucleotide sequence of Saccharomyces cerevisiae chromosome XV.</title>
        <authorList>
            <person name="Dujon B."/>
            <person name="Albermann K."/>
            <person name="Aldea M."/>
            <person name="Alexandraki D."/>
            <person name="Ansorge W."/>
            <person name="Arino J."/>
            <person name="Benes V."/>
            <person name="Bohn C."/>
            <person name="Bolotin-Fukuhara M."/>
            <person name="Bordonne R."/>
            <person name="Boyer J."/>
            <person name="Camasses A."/>
            <person name="Casamayor A."/>
            <person name="Casas C."/>
            <person name="Cheret G."/>
            <person name="Cziepluch C."/>
            <person name="Daignan-Fornier B."/>
            <person name="Dang V.-D."/>
            <person name="de Haan M."/>
            <person name="Delius H."/>
            <person name="Durand P."/>
            <person name="Fairhead C."/>
            <person name="Feldmann H."/>
            <person name="Gaillon L."/>
            <person name="Galisson F."/>
            <person name="Gamo F.-J."/>
            <person name="Gancedo C."/>
            <person name="Goffeau A."/>
            <person name="Goulding S.E."/>
            <person name="Grivell L.A."/>
            <person name="Habbig B."/>
            <person name="Hand N.J."/>
            <person name="Hani J."/>
            <person name="Hattenhorst U."/>
            <person name="Hebling U."/>
            <person name="Hernando Y."/>
            <person name="Herrero E."/>
            <person name="Heumann K."/>
            <person name="Hiesel R."/>
            <person name="Hilger F."/>
            <person name="Hofmann B."/>
            <person name="Hollenberg C.P."/>
            <person name="Hughes B."/>
            <person name="Jauniaux J.-C."/>
            <person name="Kalogeropoulos A."/>
            <person name="Katsoulou C."/>
            <person name="Kordes E."/>
            <person name="Lafuente M.J."/>
            <person name="Landt O."/>
            <person name="Louis E.J."/>
            <person name="Maarse A.C."/>
            <person name="Madania A."/>
            <person name="Mannhaupt G."/>
            <person name="Marck C."/>
            <person name="Martin R.P."/>
            <person name="Mewes H.-W."/>
            <person name="Michaux G."/>
            <person name="Paces V."/>
            <person name="Parle-McDermott A.G."/>
            <person name="Pearson B.M."/>
            <person name="Perrin A."/>
            <person name="Pettersson B."/>
            <person name="Poch O."/>
            <person name="Pohl T.M."/>
            <person name="Poirey R."/>
            <person name="Portetelle D."/>
            <person name="Pujol A."/>
            <person name="Purnelle B."/>
            <person name="Ramezani Rad M."/>
            <person name="Rechmann S."/>
            <person name="Schwager C."/>
            <person name="Schweizer M."/>
            <person name="Sor F."/>
            <person name="Sterky F."/>
            <person name="Tarassov I.A."/>
            <person name="Teodoru C."/>
            <person name="Tettelin H."/>
            <person name="Thierry A."/>
            <person name="Tobiasch E."/>
            <person name="Tzermia M."/>
            <person name="Uhlen M."/>
            <person name="Unseld M."/>
            <person name="Valens M."/>
            <person name="Vandenbol M."/>
            <person name="Vetter I."/>
            <person name="Vlcek C."/>
            <person name="Voet M."/>
            <person name="Volckaert G."/>
            <person name="Voss H."/>
            <person name="Wambutt R."/>
            <person name="Wedler H."/>
            <person name="Wiemann S."/>
            <person name="Winsor B."/>
            <person name="Wolfe K.H."/>
            <person name="Zollner A."/>
            <person name="Zumstein E."/>
            <person name="Kleine K."/>
        </authorList>
    </citation>
    <scope>NUCLEOTIDE SEQUENCE [LARGE SCALE GENOMIC DNA]</scope>
    <source>
        <strain>ATCC 204508 / S288c</strain>
    </source>
</reference>
<reference key="3">
    <citation type="journal article" date="2014" name="G3 (Bethesda)">
        <title>The reference genome sequence of Saccharomyces cerevisiae: Then and now.</title>
        <authorList>
            <person name="Engel S.R."/>
            <person name="Dietrich F.S."/>
            <person name="Fisk D.G."/>
            <person name="Binkley G."/>
            <person name="Balakrishnan R."/>
            <person name="Costanzo M.C."/>
            <person name="Dwight S.S."/>
            <person name="Hitz B.C."/>
            <person name="Karra K."/>
            <person name="Nash R.S."/>
            <person name="Weng S."/>
            <person name="Wong E.D."/>
            <person name="Lloyd P."/>
            <person name="Skrzypek M.S."/>
            <person name="Miyasato S.R."/>
            <person name="Simison M."/>
            <person name="Cherry J.M."/>
        </authorList>
    </citation>
    <scope>GENOME REANNOTATION</scope>
    <source>
        <strain>ATCC 204508 / S288c</strain>
    </source>
</reference>
<reference key="4">
    <citation type="journal article" date="2002" name="Nat. Cell Biol.">
        <title>A transmembrane ubiquitin ligase required to sort membrane proteins into multivesicular bodies.</title>
        <authorList>
            <person name="Reggiori F."/>
            <person name="Pelham H.R.B."/>
        </authorList>
    </citation>
    <scope>UBIQUITINATION BY TUL1</scope>
    <scope>MUTAGENESIS OF LEU-271</scope>
</reference>
<reference key="5">
    <citation type="journal article" date="2007" name="J. Proteome Res.">
        <title>Large-scale phosphorylation analysis of alpha-factor-arrested Saccharomyces cerevisiae.</title>
        <authorList>
            <person name="Li X."/>
            <person name="Gerber S.A."/>
            <person name="Rudner A.D."/>
            <person name="Beausoleil S.A."/>
            <person name="Haas W."/>
            <person name="Villen J."/>
            <person name="Elias J.E."/>
            <person name="Gygi S.P."/>
        </authorList>
    </citation>
    <scope>PHOSPHORYLATION [LARGE SCALE ANALYSIS] AT SER-2</scope>
    <scope>IDENTIFICATION BY MASS SPECTROMETRY [LARGE SCALE ANALYSIS]</scope>
    <source>
        <strain>ADR376</strain>
    </source>
</reference>
<reference key="6">
    <citation type="journal article" date="2008" name="Mol. Cell. Proteomics">
        <title>A multidimensional chromatography technology for in-depth phosphoproteome analysis.</title>
        <authorList>
            <person name="Albuquerque C.P."/>
            <person name="Smolka M.B."/>
            <person name="Payne S.H."/>
            <person name="Bafna V."/>
            <person name="Eng J."/>
            <person name="Zhou H."/>
        </authorList>
    </citation>
    <scope>PHOSPHORYLATION [LARGE SCALE ANALYSIS] AT SER-2 AND SER-23</scope>
    <scope>IDENTIFICATION BY MASS SPECTROMETRY [LARGE SCALE ANALYSIS]</scope>
</reference>
<reference key="7">
    <citation type="journal article" date="2009" name="Science">
        <title>Global analysis of Cdk1 substrate phosphorylation sites provides insights into evolution.</title>
        <authorList>
            <person name="Holt L.J."/>
            <person name="Tuch B.B."/>
            <person name="Villen J."/>
            <person name="Johnson A.D."/>
            <person name="Gygi S.P."/>
            <person name="Morgan D.O."/>
        </authorList>
    </citation>
    <scope>IDENTIFICATION BY MASS SPECTROMETRY [LARGE SCALE ANALYSIS]</scope>
</reference>
<dbReference type="EMBL" id="M90395">
    <property type="protein sequence ID" value="AAB38370.1"/>
    <property type="molecule type" value="Genomic_DNA"/>
</dbReference>
<dbReference type="EMBL" id="X87331">
    <property type="protein sequence ID" value="CAA60755.1"/>
    <property type="molecule type" value="Genomic_DNA"/>
</dbReference>
<dbReference type="EMBL" id="Z74944">
    <property type="protein sequence ID" value="CAA99226.1"/>
    <property type="molecule type" value="Genomic_DNA"/>
</dbReference>
<dbReference type="EMBL" id="BK006948">
    <property type="protein sequence ID" value="DAA10819.1"/>
    <property type="molecule type" value="Genomic_DNA"/>
</dbReference>
<dbReference type="PIR" id="S62175">
    <property type="entry name" value="S62175"/>
</dbReference>
<dbReference type="RefSeq" id="NP_014679.1">
    <property type="nucleotide sequence ID" value="NM_001183455.1"/>
</dbReference>
<dbReference type="SMR" id="P32854"/>
<dbReference type="BioGRID" id="34438">
    <property type="interactions" value="125"/>
</dbReference>
<dbReference type="ComplexPortal" id="CPX-5421">
    <property type="entry name" value="Endosomal SNARE complex PEP12-VTI1-SYN8-YKT6"/>
</dbReference>
<dbReference type="ComplexPortal" id="CPX-5422">
    <property type="entry name" value="Endosomal SNARE complex PEP12-VTI1-TLG1-YKT6"/>
</dbReference>
<dbReference type="ComplexPortal" id="CPX-5423">
    <property type="entry name" value="Endosomal SNARE complex PEP12-VTI1-TLG1-SNC1"/>
</dbReference>
<dbReference type="ComplexPortal" id="CPX-5424">
    <property type="entry name" value="Endosomal SNARE complex PEP12-VTI1-SYN8-SNC1"/>
</dbReference>
<dbReference type="ComplexPortal" id="CPX-5461">
    <property type="entry name" value="Endosomal SNARE complex PEP12-VTI1-SYN8-SNC2"/>
</dbReference>
<dbReference type="ComplexPortal" id="CPX-5462">
    <property type="entry name" value="Endosomal SNARE complex PEP12-VTI1-TLG1-SNC2"/>
</dbReference>
<dbReference type="DIP" id="DIP-2021N"/>
<dbReference type="FunCoup" id="P32854">
    <property type="interactions" value="792"/>
</dbReference>
<dbReference type="IntAct" id="P32854">
    <property type="interactions" value="18"/>
</dbReference>
<dbReference type="MINT" id="P32854"/>
<dbReference type="STRING" id="4932.YOR036W"/>
<dbReference type="iPTMnet" id="P32854"/>
<dbReference type="PaxDb" id="4932-YOR036W"/>
<dbReference type="PeptideAtlas" id="P32854"/>
<dbReference type="EnsemblFungi" id="YOR036W_mRNA">
    <property type="protein sequence ID" value="YOR036W"/>
    <property type="gene ID" value="YOR036W"/>
</dbReference>
<dbReference type="GeneID" id="854201"/>
<dbReference type="KEGG" id="sce:YOR036W"/>
<dbReference type="AGR" id="SGD:S000005562"/>
<dbReference type="SGD" id="S000005562">
    <property type="gene designation" value="PEP12"/>
</dbReference>
<dbReference type="VEuPathDB" id="FungiDB:YOR036W"/>
<dbReference type="eggNOG" id="KOG0811">
    <property type="taxonomic scope" value="Eukaryota"/>
</dbReference>
<dbReference type="GeneTree" id="ENSGT01000000214440"/>
<dbReference type="HOGENOM" id="CLU_059257_4_1_1"/>
<dbReference type="InParanoid" id="P32854"/>
<dbReference type="OMA" id="QPFLMEQ"/>
<dbReference type="OrthoDB" id="364348at2759"/>
<dbReference type="BioCyc" id="YEAST:G3O-33582-MONOMER"/>
<dbReference type="Reactome" id="R-SCE-204005">
    <property type="pathway name" value="COPII-mediated vesicle transport"/>
</dbReference>
<dbReference type="BioGRID-ORCS" id="854201">
    <property type="hits" value="6 hits in 10 CRISPR screens"/>
</dbReference>
<dbReference type="PRO" id="PR:P32854"/>
<dbReference type="Proteomes" id="UP000002311">
    <property type="component" value="Chromosome XV"/>
</dbReference>
<dbReference type="RNAct" id="P32854">
    <property type="molecule type" value="protein"/>
</dbReference>
<dbReference type="GO" id="GO:0005829">
    <property type="term" value="C:cytosol"/>
    <property type="evidence" value="ECO:0007669"/>
    <property type="project" value="GOC"/>
</dbReference>
<dbReference type="GO" id="GO:0012505">
    <property type="term" value="C:endomembrane system"/>
    <property type="evidence" value="ECO:0000318"/>
    <property type="project" value="GO_Central"/>
</dbReference>
<dbReference type="GO" id="GO:0005768">
    <property type="term" value="C:endosome"/>
    <property type="evidence" value="ECO:0000315"/>
    <property type="project" value="SGD"/>
</dbReference>
<dbReference type="GO" id="GO:0010008">
    <property type="term" value="C:endosome membrane"/>
    <property type="evidence" value="ECO:0000303"/>
    <property type="project" value="ComplexPortal"/>
</dbReference>
<dbReference type="GO" id="GO:0000329">
    <property type="term" value="C:fungal-type vacuole membrane"/>
    <property type="evidence" value="ECO:0007005"/>
    <property type="project" value="SGD"/>
</dbReference>
<dbReference type="GO" id="GO:0005794">
    <property type="term" value="C:Golgi apparatus"/>
    <property type="evidence" value="ECO:0000315"/>
    <property type="project" value="SGD"/>
</dbReference>
<dbReference type="GO" id="GO:0000139">
    <property type="term" value="C:Golgi membrane"/>
    <property type="evidence" value="ECO:0000303"/>
    <property type="project" value="ComplexPortal"/>
</dbReference>
<dbReference type="GO" id="GO:0031201">
    <property type="term" value="C:SNARE complex"/>
    <property type="evidence" value="ECO:0000318"/>
    <property type="project" value="GO_Central"/>
</dbReference>
<dbReference type="GO" id="GO:0005484">
    <property type="term" value="F:SNAP receptor activity"/>
    <property type="evidence" value="ECO:0000314"/>
    <property type="project" value="SGD"/>
</dbReference>
<dbReference type="GO" id="GO:0000149">
    <property type="term" value="F:SNARE binding"/>
    <property type="evidence" value="ECO:0000318"/>
    <property type="project" value="GO_Central"/>
</dbReference>
<dbReference type="GO" id="GO:0032258">
    <property type="term" value="P:cytoplasm to vacuole targeting by the Cvt pathway"/>
    <property type="evidence" value="ECO:0000315"/>
    <property type="project" value="SGD"/>
</dbReference>
<dbReference type="GO" id="GO:0006895">
    <property type="term" value="P:Golgi to endosome transport"/>
    <property type="evidence" value="ECO:0000303"/>
    <property type="project" value="ComplexPortal"/>
</dbReference>
<dbReference type="GO" id="GO:0006896">
    <property type="term" value="P:Golgi to vacuole transport"/>
    <property type="evidence" value="ECO:0000315"/>
    <property type="project" value="SGD"/>
</dbReference>
<dbReference type="GO" id="GO:0048210">
    <property type="term" value="P:Golgi vesicle fusion to target membrane"/>
    <property type="evidence" value="ECO:0000303"/>
    <property type="project" value="ComplexPortal"/>
</dbReference>
<dbReference type="GO" id="GO:0006886">
    <property type="term" value="P:intracellular protein transport"/>
    <property type="evidence" value="ECO:0000318"/>
    <property type="project" value="GO_Central"/>
</dbReference>
<dbReference type="GO" id="GO:0016236">
    <property type="term" value="P:macroautophagy"/>
    <property type="evidence" value="ECO:0000315"/>
    <property type="project" value="SGD"/>
</dbReference>
<dbReference type="GO" id="GO:0000011">
    <property type="term" value="P:vacuole inheritance"/>
    <property type="evidence" value="ECO:0000315"/>
    <property type="project" value="SGD"/>
</dbReference>
<dbReference type="GO" id="GO:0048278">
    <property type="term" value="P:vesicle docking"/>
    <property type="evidence" value="ECO:0000318"/>
    <property type="project" value="GO_Central"/>
</dbReference>
<dbReference type="GO" id="GO:0006906">
    <property type="term" value="P:vesicle fusion"/>
    <property type="evidence" value="ECO:0000318"/>
    <property type="project" value="GO_Central"/>
</dbReference>
<dbReference type="CDD" id="cd15840">
    <property type="entry name" value="SNARE_Qa"/>
    <property type="match status" value="1"/>
</dbReference>
<dbReference type="FunFam" id="1.20.5.110:FF:000100">
    <property type="entry name" value="Pep12p"/>
    <property type="match status" value="1"/>
</dbReference>
<dbReference type="FunFam" id="1.20.58.70:FF:000041">
    <property type="entry name" value="Pep12p"/>
    <property type="match status" value="1"/>
</dbReference>
<dbReference type="Gene3D" id="1.20.5.110">
    <property type="match status" value="1"/>
</dbReference>
<dbReference type="Gene3D" id="1.20.58.70">
    <property type="match status" value="1"/>
</dbReference>
<dbReference type="InterPro" id="IPR010989">
    <property type="entry name" value="SNARE"/>
</dbReference>
<dbReference type="InterPro" id="IPR045242">
    <property type="entry name" value="Syntaxin"/>
</dbReference>
<dbReference type="InterPro" id="IPR006012">
    <property type="entry name" value="Syntaxin/epimorphin_CS"/>
</dbReference>
<dbReference type="InterPro" id="IPR006011">
    <property type="entry name" value="Syntaxin_N"/>
</dbReference>
<dbReference type="InterPro" id="IPR000727">
    <property type="entry name" value="T_SNARE_dom"/>
</dbReference>
<dbReference type="PANTHER" id="PTHR19957:SF38">
    <property type="entry name" value="LD27581P"/>
    <property type="match status" value="1"/>
</dbReference>
<dbReference type="PANTHER" id="PTHR19957">
    <property type="entry name" value="SYNTAXIN"/>
    <property type="match status" value="1"/>
</dbReference>
<dbReference type="Pfam" id="PF05739">
    <property type="entry name" value="SNARE"/>
    <property type="match status" value="1"/>
</dbReference>
<dbReference type="Pfam" id="PF14523">
    <property type="entry name" value="Syntaxin_2"/>
    <property type="match status" value="1"/>
</dbReference>
<dbReference type="SMART" id="SM00503">
    <property type="entry name" value="SynN"/>
    <property type="match status" value="1"/>
</dbReference>
<dbReference type="SMART" id="SM00397">
    <property type="entry name" value="t_SNARE"/>
    <property type="match status" value="1"/>
</dbReference>
<dbReference type="SUPFAM" id="SSF47661">
    <property type="entry name" value="t-snare proteins"/>
    <property type="match status" value="1"/>
</dbReference>
<dbReference type="PROSITE" id="PS00914">
    <property type="entry name" value="SYNTAXIN"/>
    <property type="match status" value="1"/>
</dbReference>
<dbReference type="PROSITE" id="PS50192">
    <property type="entry name" value="T_SNARE"/>
    <property type="match status" value="1"/>
</dbReference>
<accession>P32854</accession>
<accession>D6W2A3</accession>
<evidence type="ECO:0000255" key="1"/>
<evidence type="ECO:0000255" key="2">
    <source>
        <dbReference type="PROSITE-ProRule" id="PRU00202"/>
    </source>
</evidence>
<evidence type="ECO:0000269" key="3">
    <source>
    </source>
</evidence>
<evidence type="ECO:0000305" key="4"/>
<evidence type="ECO:0007744" key="5">
    <source>
    </source>
</evidence>
<evidence type="ECO:0007744" key="6">
    <source>
    </source>
</evidence>
<protein>
    <recommendedName>
        <fullName>Syntaxin PEP12</fullName>
    </recommendedName>
    <alternativeName>
        <fullName>Carboxypeptidase Y-deficient protein 12</fullName>
    </alternativeName>
    <alternativeName>
        <fullName>Vacuolar protein sorting-associated protein 6</fullName>
    </alternativeName>
    <alternativeName>
        <fullName>Vacuolar protein-targeting protein 13</fullName>
    </alternativeName>
</protein>
<keyword id="KW-0175">Coiled coil</keyword>
<keyword id="KW-0472">Membrane</keyword>
<keyword id="KW-0597">Phosphoprotein</keyword>
<keyword id="KW-1185">Reference proteome</keyword>
<keyword id="KW-0812">Transmembrane</keyword>
<keyword id="KW-1133">Transmembrane helix</keyword>
<keyword id="KW-0832">Ubl conjugation</keyword>
<comment type="function">
    <text>Plays a role in the sorting and targeting of vacuolar proteases.</text>
</comment>
<comment type="interaction">
    <interactant intactId="EBI-13098">
        <id>P32854</id>
    </interactant>
    <interactant intactId="EBI-2989">
        <id>Q12154</id>
        <label>GET3</label>
    </interactant>
    <organismsDiffer>false</organismsDiffer>
    <experiments>5</experiments>
</comment>
<comment type="interaction">
    <interactant intactId="EBI-13098">
        <id>P32854</id>
    </interactant>
    <interactant intactId="EBI-26982">
        <id>P36015</id>
        <label>YKT6</label>
    </interactant>
    <organismsDiffer>false</organismsDiffer>
    <experiments>2</experiments>
</comment>
<comment type="subcellular location">
    <subcellularLocation>
        <location evidence="4">Membrane</location>
        <topology evidence="4">Single-pass type IV membrane protein</topology>
    </subcellularLocation>
</comment>
<comment type="PTM">
    <text evidence="3">Ubiquitinated.</text>
</comment>
<comment type="similarity">
    <text evidence="4">Belongs to the syntaxin family.</text>
</comment>